<name>PGA26_CANAL</name>
<comment type="function">
    <text evidence="4">GPI-anchored protein involved in proper cell wall integrity. Does not seem to be directly involved in the synthesis of the cell wall. Required for normal virulence in a mouse model of disseminated candidiasis.</text>
</comment>
<comment type="subcellular location">
    <subcellularLocation>
        <location evidence="6">Cell membrane</location>
        <topology evidence="6">Lipid-anchor</topology>
        <topology evidence="6">GPI-anchor</topology>
    </subcellularLocation>
</comment>
<comment type="induction">
    <text evidence="2 3 5">Induced during cell wall regeneration. Expression is also increased under high-iron conditions. Repressed by the HAP43 transcription factor.</text>
</comment>
<comment type="disruption phenotype">
    <text evidence="4">Leads to hyperfilamentation, increased biofilm formation and reduced virulence in a mouse model of disseminated candidiasis. Also leads to increased susceptibility to antifungals (fluconazol, posaconazol or amphotericin B) that target the plasma membrane and to altered sensitivities to environmental (heat, osmotic and oxidative) stresses.</text>
</comment>
<evidence type="ECO:0000255" key="1"/>
<evidence type="ECO:0000269" key="2">
    <source>
    </source>
</evidence>
<evidence type="ECO:0000269" key="3">
    <source>
    </source>
</evidence>
<evidence type="ECO:0000269" key="4">
    <source>
    </source>
</evidence>
<evidence type="ECO:0000269" key="5">
    <source>
    </source>
</evidence>
<evidence type="ECO:0000305" key="6"/>
<reference key="1">
    <citation type="journal article" date="2004" name="Proc. Natl. Acad. Sci. U.S.A.">
        <title>The diploid genome sequence of Candida albicans.</title>
        <authorList>
            <person name="Jones T."/>
            <person name="Federspiel N.A."/>
            <person name="Chibana H."/>
            <person name="Dungan J."/>
            <person name="Kalman S."/>
            <person name="Magee B.B."/>
            <person name="Newport G."/>
            <person name="Thorstenson Y.R."/>
            <person name="Agabian N."/>
            <person name="Magee P.T."/>
            <person name="Davis R.W."/>
            <person name="Scherer S."/>
        </authorList>
    </citation>
    <scope>NUCLEOTIDE SEQUENCE [LARGE SCALE GENOMIC DNA]</scope>
    <source>
        <strain>SC5314 / ATCC MYA-2876</strain>
    </source>
</reference>
<reference key="2">
    <citation type="journal article" date="2007" name="Genome Biol.">
        <title>Assembly of the Candida albicans genome into sixteen supercontigs aligned on the eight chromosomes.</title>
        <authorList>
            <person name="van het Hoog M."/>
            <person name="Rast T.J."/>
            <person name="Martchenko M."/>
            <person name="Grindle S."/>
            <person name="Dignard D."/>
            <person name="Hogues H."/>
            <person name="Cuomo C."/>
            <person name="Berriman M."/>
            <person name="Scherer S."/>
            <person name="Magee B.B."/>
            <person name="Whiteway M."/>
            <person name="Chibana H."/>
            <person name="Nantel A."/>
            <person name="Magee P.T."/>
        </authorList>
    </citation>
    <scope>GENOME REANNOTATION</scope>
    <source>
        <strain>SC5314 / ATCC MYA-2876</strain>
    </source>
</reference>
<reference key="3">
    <citation type="journal article" date="2013" name="Genome Biol.">
        <title>Assembly of a phased diploid Candida albicans genome facilitates allele-specific measurements and provides a simple model for repeat and indel structure.</title>
        <authorList>
            <person name="Muzzey D."/>
            <person name="Schwartz K."/>
            <person name="Weissman J.S."/>
            <person name="Sherlock G."/>
        </authorList>
    </citation>
    <scope>NUCLEOTIDE SEQUENCE [LARGE SCALE GENOMIC DNA]</scope>
    <scope>GENOME REANNOTATION</scope>
    <source>
        <strain>SC5314 / ATCC MYA-2876</strain>
    </source>
</reference>
<reference key="4">
    <citation type="journal article" date="2003" name="Yeast">
        <title>Genome-wide identification of fungal GPI proteins.</title>
        <authorList>
            <person name="De Groot P.W."/>
            <person name="Hellingwerf K.J."/>
            <person name="Klis F.M."/>
        </authorList>
    </citation>
    <scope>PREDICTION OF GPI-ANCHOR</scope>
</reference>
<reference key="5">
    <citation type="journal article" date="2004" name="Mol. Microbiol.">
        <title>Regulatory networks affected by iron availability in Candida albicans.</title>
        <authorList>
            <person name="Lan C.Y."/>
            <person name="Rodarte G."/>
            <person name="Murillo L.A."/>
            <person name="Jones T."/>
            <person name="Davis R.W."/>
            <person name="Dungan J."/>
            <person name="Newport G."/>
            <person name="Agabian N."/>
        </authorList>
    </citation>
    <scope>INDUCTION</scope>
</reference>
<reference key="6">
    <citation type="journal article" date="2006" name="Fungal Genet. Biol.">
        <title>Genomic response programs of Candida albicans following protoplasting and regeneration.</title>
        <authorList>
            <person name="Castillo L."/>
            <person name="Martinez A.I."/>
            <person name="Garcera A."/>
            <person name="Garcia-Martinez J."/>
            <person name="Ruiz-Herrera J."/>
            <person name="Valentin E."/>
            <person name="Sentandreu R."/>
        </authorList>
    </citation>
    <scope>INDUCTION</scope>
</reference>
<reference key="7">
    <citation type="journal article" date="2011" name="FEMS Yeast Res.">
        <title>Pga26 mediates filamentation and biofilm formation and is required for virulence in Candida albicans.</title>
        <authorList>
            <person name="Laforet L."/>
            <person name="Moreno I."/>
            <person name="Sanchez-Fresneda R."/>
            <person name="Martinez-Esparza M."/>
            <person name="Martinez J.P."/>
            <person name="Arguelles J.C."/>
            <person name="de Groot P.W."/>
            <person name="Valentin-Gomez E."/>
        </authorList>
    </citation>
    <scope>FUNCTION</scope>
    <scope>DISRUPTION PHENOTYPE</scope>
</reference>
<reference key="8">
    <citation type="journal article" date="2011" name="J. Biol. Chem.">
        <title>Cap2-HAP complex is a critical transcriptional regulator that has dual but contrasting roles in regulation of iron homeostasis in Candida albicans.</title>
        <authorList>
            <person name="Singh R.P."/>
            <person name="Prasad H.K."/>
            <person name="Sinha I."/>
            <person name="Agarwal N."/>
            <person name="Natarajan K."/>
        </authorList>
    </citation>
    <scope>INDUCTION</scope>
</reference>
<keyword id="KW-1003">Cell membrane</keyword>
<keyword id="KW-0325">Glycoprotein</keyword>
<keyword id="KW-0336">GPI-anchor</keyword>
<keyword id="KW-0449">Lipoprotein</keyword>
<keyword id="KW-0472">Membrane</keyword>
<keyword id="KW-1185">Reference proteome</keyword>
<keyword id="KW-0732">Signal</keyword>
<keyword id="KW-0843">Virulence</keyword>
<organism>
    <name type="scientific">Candida albicans (strain SC5314 / ATCC MYA-2876)</name>
    <name type="common">Yeast</name>
    <dbReference type="NCBI Taxonomy" id="237561"/>
    <lineage>
        <taxon>Eukaryota</taxon>
        <taxon>Fungi</taxon>
        <taxon>Dikarya</taxon>
        <taxon>Ascomycota</taxon>
        <taxon>Saccharomycotina</taxon>
        <taxon>Pichiomycetes</taxon>
        <taxon>Debaryomycetaceae</taxon>
        <taxon>Candida/Lodderomyces clade</taxon>
        <taxon>Candida</taxon>
    </lineage>
</organism>
<protein>
    <recommendedName>
        <fullName>Predicted GPI-anchored protein 26</fullName>
    </recommendedName>
</protein>
<gene>
    <name type="primary">PGA26</name>
    <name type="ordered locus">CAALFM_C105760CA</name>
    <name type="ORF">CaO19.10012</name>
    <name type="ORF">CaO19.2475</name>
</gene>
<proteinExistence type="evidence at protein level"/>
<accession>Q5AA09</accession>
<accession>A0A1D8PDQ4</accession>
<dbReference type="EMBL" id="CP017623">
    <property type="protein sequence ID" value="AOW26240.1"/>
    <property type="molecule type" value="Genomic_DNA"/>
</dbReference>
<dbReference type="RefSeq" id="XP_718496.2">
    <property type="nucleotide sequence ID" value="XM_713403.2"/>
</dbReference>
<dbReference type="STRING" id="237561.Q5AA09"/>
<dbReference type="GlyCosmos" id="Q5AA09">
    <property type="glycosylation" value="2 sites, No reported glycans"/>
</dbReference>
<dbReference type="EnsemblFungi" id="C1_05760C_A-T">
    <property type="protein sequence ID" value="C1_05760C_A-T-p1"/>
    <property type="gene ID" value="C1_05760C_A"/>
</dbReference>
<dbReference type="GeneID" id="3639890"/>
<dbReference type="KEGG" id="cal:CAALFM_C105760CA"/>
<dbReference type="CGD" id="CAL0000181671">
    <property type="gene designation" value="PGA26"/>
</dbReference>
<dbReference type="VEuPathDB" id="FungiDB:C1_05760C_A"/>
<dbReference type="eggNOG" id="ENOG502RQ2F">
    <property type="taxonomic scope" value="Eukaryota"/>
</dbReference>
<dbReference type="HOGENOM" id="CLU_119130_0_0_1"/>
<dbReference type="InParanoid" id="Q5AA09"/>
<dbReference type="OrthoDB" id="4026603at2759"/>
<dbReference type="PHI-base" id="PHI:3516"/>
<dbReference type="PRO" id="PR:Q5AA09"/>
<dbReference type="Proteomes" id="UP000000559">
    <property type="component" value="Chromosome 1"/>
</dbReference>
<dbReference type="GO" id="GO:0005886">
    <property type="term" value="C:plasma membrane"/>
    <property type="evidence" value="ECO:0007669"/>
    <property type="project" value="UniProtKB-SubCell"/>
</dbReference>
<dbReference type="GO" id="GO:0098552">
    <property type="term" value="C:side of membrane"/>
    <property type="evidence" value="ECO:0007669"/>
    <property type="project" value="UniProtKB-KW"/>
</dbReference>
<dbReference type="GO" id="GO:0009267">
    <property type="term" value="P:cellular response to starvation"/>
    <property type="evidence" value="ECO:0000315"/>
    <property type="project" value="CGD"/>
</dbReference>
<dbReference type="GO" id="GO:0030447">
    <property type="term" value="P:filamentous growth"/>
    <property type="evidence" value="ECO:0000315"/>
    <property type="project" value="CGD"/>
</dbReference>
<dbReference type="GO" id="GO:0031505">
    <property type="term" value="P:fungal-type cell wall organization"/>
    <property type="evidence" value="ECO:0000315"/>
    <property type="project" value="CGD"/>
</dbReference>
<dbReference type="GO" id="GO:0060258">
    <property type="term" value="P:negative regulation of filamentous growth"/>
    <property type="evidence" value="ECO:0000315"/>
    <property type="project" value="CGD"/>
</dbReference>
<dbReference type="GO" id="GO:0044011">
    <property type="term" value="P:single-species biofilm formation on inanimate substrate"/>
    <property type="evidence" value="ECO:0000315"/>
    <property type="project" value="CGD"/>
</dbReference>
<sequence length="131" mass="13509">MHFSKIIAGSALSSVALAEFQNGTVTTHVTATGYTTYCPYPTTITLTICEEENICTKRPIVVSEPTTVTVTEPCIISTSYETTEVVVTTTLPSSLSPSSVAPANVTSFEGAGSKNVASALVGVVAIAAAMM</sequence>
<feature type="signal peptide" evidence="1">
    <location>
        <begin position="1"/>
        <end position="18"/>
    </location>
</feature>
<feature type="chain" id="PRO_0000422910" description="Predicted GPI-anchored protein 26">
    <location>
        <begin position="19"/>
        <end position="110"/>
    </location>
</feature>
<feature type="propeptide" id="PRO_0000422911" description="Removed in mature form" evidence="1">
    <location>
        <begin position="111"/>
        <end position="131"/>
    </location>
</feature>
<feature type="lipid moiety-binding region" description="GPI-anchor amidated glycine" evidence="1">
    <location>
        <position position="110"/>
    </location>
</feature>
<feature type="glycosylation site" description="N-linked (GlcNAc...) asparagine" evidence="1">
    <location>
        <position position="22"/>
    </location>
</feature>
<feature type="glycosylation site" description="N-linked (GlcNAc...) asparagine" evidence="1">
    <location>
        <position position="104"/>
    </location>
</feature>